<reference key="1">
    <citation type="submission" date="2007-04" db="EMBL/GenBank/DDBJ databases">
        <title>Complete sequence of chromosome of Rhodobacter sphaeroides ATCC 17025.</title>
        <authorList>
            <consortium name="US DOE Joint Genome Institute"/>
            <person name="Copeland A."/>
            <person name="Lucas S."/>
            <person name="Lapidus A."/>
            <person name="Barry K."/>
            <person name="Detter J.C."/>
            <person name="Glavina del Rio T."/>
            <person name="Hammon N."/>
            <person name="Israni S."/>
            <person name="Dalin E."/>
            <person name="Tice H."/>
            <person name="Pitluck S."/>
            <person name="Chertkov O."/>
            <person name="Brettin T."/>
            <person name="Bruce D."/>
            <person name="Han C."/>
            <person name="Schmutz J."/>
            <person name="Larimer F."/>
            <person name="Land M."/>
            <person name="Hauser L."/>
            <person name="Kyrpides N."/>
            <person name="Kim E."/>
            <person name="Richardson P."/>
            <person name="Mackenzie C."/>
            <person name="Choudhary M."/>
            <person name="Donohue T.J."/>
            <person name="Kaplan S."/>
        </authorList>
    </citation>
    <scope>NUCLEOTIDE SEQUENCE [LARGE SCALE GENOMIC DNA]</scope>
    <source>
        <strain>ATCC 17025 / ATH 2.4.3</strain>
    </source>
</reference>
<gene>
    <name evidence="1" type="primary">pepA</name>
    <name type="ordered locus">Rsph17025_1122</name>
</gene>
<dbReference type="EC" id="3.4.11.1" evidence="1"/>
<dbReference type="EC" id="3.4.11.10" evidence="1"/>
<dbReference type="EMBL" id="CP000661">
    <property type="protein sequence ID" value="ABP70023.1"/>
    <property type="molecule type" value="Genomic_DNA"/>
</dbReference>
<dbReference type="SMR" id="A4WRK9"/>
<dbReference type="STRING" id="349102.Rsph17025_1122"/>
<dbReference type="KEGG" id="rsq:Rsph17025_1122"/>
<dbReference type="eggNOG" id="COG0260">
    <property type="taxonomic scope" value="Bacteria"/>
</dbReference>
<dbReference type="HOGENOM" id="CLU_013734_6_0_5"/>
<dbReference type="BioCyc" id="RSPH349102:G1G8M-1149-MONOMER"/>
<dbReference type="GO" id="GO:0005737">
    <property type="term" value="C:cytoplasm"/>
    <property type="evidence" value="ECO:0007669"/>
    <property type="project" value="UniProtKB-SubCell"/>
</dbReference>
<dbReference type="GO" id="GO:0030145">
    <property type="term" value="F:manganese ion binding"/>
    <property type="evidence" value="ECO:0007669"/>
    <property type="project" value="UniProtKB-UniRule"/>
</dbReference>
<dbReference type="GO" id="GO:0070006">
    <property type="term" value="F:metalloaminopeptidase activity"/>
    <property type="evidence" value="ECO:0007669"/>
    <property type="project" value="InterPro"/>
</dbReference>
<dbReference type="GO" id="GO:0006508">
    <property type="term" value="P:proteolysis"/>
    <property type="evidence" value="ECO:0007669"/>
    <property type="project" value="UniProtKB-KW"/>
</dbReference>
<dbReference type="CDD" id="cd00433">
    <property type="entry name" value="Peptidase_M17"/>
    <property type="match status" value="1"/>
</dbReference>
<dbReference type="Gene3D" id="3.40.220.10">
    <property type="entry name" value="Leucine Aminopeptidase, subunit E, domain 1"/>
    <property type="match status" value="1"/>
</dbReference>
<dbReference type="Gene3D" id="3.40.630.10">
    <property type="entry name" value="Zn peptidases"/>
    <property type="match status" value="1"/>
</dbReference>
<dbReference type="HAMAP" id="MF_00181">
    <property type="entry name" value="Cytosol_peptidase_M17"/>
    <property type="match status" value="1"/>
</dbReference>
<dbReference type="InterPro" id="IPR011356">
    <property type="entry name" value="Leucine_aapep/pepB"/>
</dbReference>
<dbReference type="InterPro" id="IPR043472">
    <property type="entry name" value="Macro_dom-like"/>
</dbReference>
<dbReference type="InterPro" id="IPR000819">
    <property type="entry name" value="Peptidase_M17_C"/>
</dbReference>
<dbReference type="InterPro" id="IPR023042">
    <property type="entry name" value="Peptidase_M17_leu_NH2_pept"/>
</dbReference>
<dbReference type="NCBIfam" id="NF002075">
    <property type="entry name" value="PRK00913.2-2"/>
    <property type="match status" value="1"/>
</dbReference>
<dbReference type="NCBIfam" id="NF002077">
    <property type="entry name" value="PRK00913.2-4"/>
    <property type="match status" value="1"/>
</dbReference>
<dbReference type="PANTHER" id="PTHR11963:SF23">
    <property type="entry name" value="CYTOSOL AMINOPEPTIDASE"/>
    <property type="match status" value="1"/>
</dbReference>
<dbReference type="PANTHER" id="PTHR11963">
    <property type="entry name" value="LEUCINE AMINOPEPTIDASE-RELATED"/>
    <property type="match status" value="1"/>
</dbReference>
<dbReference type="Pfam" id="PF00883">
    <property type="entry name" value="Peptidase_M17"/>
    <property type="match status" value="1"/>
</dbReference>
<dbReference type="PRINTS" id="PR00481">
    <property type="entry name" value="LAMNOPPTDASE"/>
</dbReference>
<dbReference type="SUPFAM" id="SSF52949">
    <property type="entry name" value="Macro domain-like"/>
    <property type="match status" value="1"/>
</dbReference>
<dbReference type="SUPFAM" id="SSF53187">
    <property type="entry name" value="Zn-dependent exopeptidases"/>
    <property type="match status" value="1"/>
</dbReference>
<dbReference type="PROSITE" id="PS00631">
    <property type="entry name" value="CYTOSOL_AP"/>
    <property type="match status" value="1"/>
</dbReference>
<organism>
    <name type="scientific">Cereibacter sphaeroides (strain ATCC 17025 / ATH 2.4.3)</name>
    <name type="common">Rhodobacter sphaeroides</name>
    <dbReference type="NCBI Taxonomy" id="349102"/>
    <lineage>
        <taxon>Bacteria</taxon>
        <taxon>Pseudomonadati</taxon>
        <taxon>Pseudomonadota</taxon>
        <taxon>Alphaproteobacteria</taxon>
        <taxon>Rhodobacterales</taxon>
        <taxon>Paracoccaceae</taxon>
        <taxon>Cereibacter</taxon>
    </lineage>
</organism>
<evidence type="ECO:0000255" key="1">
    <source>
        <dbReference type="HAMAP-Rule" id="MF_00181"/>
    </source>
</evidence>
<sequence>MTHPVPIQFQSPDLEAIASSAGRIVVFAGEGGAMGVAAKRVNRLMRGALERAAASEAFGKLKQGEAMELGFPAGMAADAVQLVKLDRRCDVATARKAGGAIGRSLSKAGTLVLADTIQRAAEVSFGIALRAYDFTPHKTGEKTVPGPVTMMVANPETVAAEAGPMAALAEGIFFTRDLVNEPANVLSTFDFAARLAAMHELGLEVEILEEEDMEKLGMRALLGVGQGSEHPSKLVVMQWKGGPEDQVPLALVGKGVVFDTGGISIKPAAGMEDMTMDMGGAAVVAGVMRTLAMRKARANVVGLVGIVENMPDGNAQRPGDVVRSMKGDTIEVINTDAEGRLVLADVLWYAQERFNPRGVIDLATLTGAIIVALGHENTGVFSNDDAFCAAFLKAAQSEGEGAWRMPMGERYDEMLKSRIADMRNSTGREAGSITAAHFLRRFVKPETPWIHLDIAGTALLKGDTALAPKGATGWGVLSLDRLIRDMLEK</sequence>
<keyword id="KW-0031">Aminopeptidase</keyword>
<keyword id="KW-0963">Cytoplasm</keyword>
<keyword id="KW-0378">Hydrolase</keyword>
<keyword id="KW-0464">Manganese</keyword>
<keyword id="KW-0479">Metal-binding</keyword>
<keyword id="KW-0645">Protease</keyword>
<feature type="chain" id="PRO_1000019971" description="Probable cytosol aminopeptidase">
    <location>
        <begin position="1"/>
        <end position="489"/>
    </location>
</feature>
<feature type="active site" evidence="1">
    <location>
        <position position="266"/>
    </location>
</feature>
<feature type="active site" evidence="1">
    <location>
        <position position="340"/>
    </location>
</feature>
<feature type="binding site" evidence="1">
    <location>
        <position position="254"/>
    </location>
    <ligand>
        <name>Mn(2+)</name>
        <dbReference type="ChEBI" id="CHEBI:29035"/>
        <label>2</label>
    </ligand>
</feature>
<feature type="binding site" evidence="1">
    <location>
        <position position="259"/>
    </location>
    <ligand>
        <name>Mn(2+)</name>
        <dbReference type="ChEBI" id="CHEBI:29035"/>
        <label>1</label>
    </ligand>
</feature>
<feature type="binding site" evidence="1">
    <location>
        <position position="259"/>
    </location>
    <ligand>
        <name>Mn(2+)</name>
        <dbReference type="ChEBI" id="CHEBI:29035"/>
        <label>2</label>
    </ligand>
</feature>
<feature type="binding site" evidence="1">
    <location>
        <position position="277"/>
    </location>
    <ligand>
        <name>Mn(2+)</name>
        <dbReference type="ChEBI" id="CHEBI:29035"/>
        <label>2</label>
    </ligand>
</feature>
<feature type="binding site" evidence="1">
    <location>
        <position position="336"/>
    </location>
    <ligand>
        <name>Mn(2+)</name>
        <dbReference type="ChEBI" id="CHEBI:29035"/>
        <label>1</label>
    </ligand>
</feature>
<feature type="binding site" evidence="1">
    <location>
        <position position="338"/>
    </location>
    <ligand>
        <name>Mn(2+)</name>
        <dbReference type="ChEBI" id="CHEBI:29035"/>
        <label>1</label>
    </ligand>
</feature>
<feature type="binding site" evidence="1">
    <location>
        <position position="338"/>
    </location>
    <ligand>
        <name>Mn(2+)</name>
        <dbReference type="ChEBI" id="CHEBI:29035"/>
        <label>2</label>
    </ligand>
</feature>
<accession>A4WRK9</accession>
<name>AMPA_CERS5</name>
<proteinExistence type="inferred from homology"/>
<protein>
    <recommendedName>
        <fullName evidence="1">Probable cytosol aminopeptidase</fullName>
        <ecNumber evidence="1">3.4.11.1</ecNumber>
    </recommendedName>
    <alternativeName>
        <fullName evidence="1">Leucine aminopeptidase</fullName>
        <shortName evidence="1">LAP</shortName>
        <ecNumber evidence="1">3.4.11.10</ecNumber>
    </alternativeName>
    <alternativeName>
        <fullName evidence="1">Leucyl aminopeptidase</fullName>
    </alternativeName>
</protein>
<comment type="function">
    <text evidence="1">Presumably involved in the processing and regular turnover of intracellular proteins. Catalyzes the removal of unsubstituted N-terminal amino acids from various peptides.</text>
</comment>
<comment type="catalytic activity">
    <reaction evidence="1">
        <text>Release of an N-terminal amino acid, Xaa-|-Yaa-, in which Xaa is preferably Leu, but may be other amino acids including Pro although not Arg or Lys, and Yaa may be Pro. Amino acid amides and methyl esters are also readily hydrolyzed, but rates on arylamides are exceedingly low.</text>
        <dbReference type="EC" id="3.4.11.1"/>
    </reaction>
</comment>
<comment type="catalytic activity">
    <reaction evidence="1">
        <text>Release of an N-terminal amino acid, preferentially leucine, but not glutamic or aspartic acids.</text>
        <dbReference type="EC" id="3.4.11.10"/>
    </reaction>
</comment>
<comment type="cofactor">
    <cofactor evidence="1">
        <name>Mn(2+)</name>
        <dbReference type="ChEBI" id="CHEBI:29035"/>
    </cofactor>
    <text evidence="1">Binds 2 manganese ions per subunit.</text>
</comment>
<comment type="subcellular location">
    <subcellularLocation>
        <location evidence="1">Cytoplasm</location>
    </subcellularLocation>
</comment>
<comment type="similarity">
    <text evidence="1">Belongs to the peptidase M17 family.</text>
</comment>